<keyword id="KW-0249">Electron transport</keyword>
<keyword id="KW-0349">Heme</keyword>
<keyword id="KW-0408">Iron</keyword>
<keyword id="KW-0472">Membrane</keyword>
<keyword id="KW-0479">Metal-binding</keyword>
<keyword id="KW-0496">Mitochondrion</keyword>
<keyword id="KW-0999">Mitochondrion inner membrane</keyword>
<keyword id="KW-0679">Respiratory chain</keyword>
<keyword id="KW-0812">Transmembrane</keyword>
<keyword id="KW-1133">Transmembrane helix</keyword>
<keyword id="KW-0813">Transport</keyword>
<keyword id="KW-0830">Ubiquinone</keyword>
<sequence length="370" mass="41954">MPHQQILMLFGLLPVATNISTWWNFGSMLLACSTLQVLTGFFLAVHYTANINMAFSSIIHITRDVPYGWLMQNLHAIGASMFFICIYIHIARGLYYGSYLNKETWLSGTTLLIMLMATAFFGYVLPWGQMSFWAATVITNLLTAIPYLGSTMTTWLWGGFAINDPTLTRFFALHFILPFGIISLSSLHILLLHEEGSSNPLGTNSDIDKIPFHPYQTYKDLLMLAMLTTLLLMIVSFFPDIFNDPDNFSKANPLVTPQHIKPEWYFLFAYGILRSIPNKLGGALALTMSIMILLTVPFTHTSKLRSMMFRPLMQLMFWTFAATFLVISWSSTKPVEPPFTTISQAAALMYFLFFISKPLMGLMENKIMKT</sequence>
<accession>O48062</accession>
<geneLocation type="mitochondrion"/>
<proteinExistence type="inferred from homology"/>
<name>CYB_CHISV</name>
<protein>
    <recommendedName>
        <fullName>Cytochrome b</fullName>
    </recommendedName>
    <alternativeName>
        <fullName>Complex III subunit 3</fullName>
    </alternativeName>
    <alternativeName>
        <fullName>Complex III subunit III</fullName>
    </alternativeName>
    <alternativeName>
        <fullName>Cytochrome b-c1 complex subunit 3</fullName>
    </alternativeName>
    <alternativeName>
        <fullName>Ubiquinol-cytochrome-c reductase complex cytochrome b subunit</fullName>
    </alternativeName>
</protein>
<comment type="function">
    <text evidence="2">Component of the ubiquinol-cytochrome c reductase complex (complex III or cytochrome b-c1 complex) that is part of the mitochondrial respiratory chain. The b-c1 complex mediates electron transfer from ubiquinol to cytochrome c. Contributes to the generation of a proton gradient across the mitochondrial membrane that is then used for ATP synthesis.</text>
</comment>
<comment type="cofactor">
    <cofactor evidence="2">
        <name>heme b</name>
        <dbReference type="ChEBI" id="CHEBI:60344"/>
    </cofactor>
    <text evidence="2">Binds 2 heme b groups non-covalently.</text>
</comment>
<comment type="subunit">
    <text evidence="2">The cytochrome bc1 complex contains 3 respiratory subunits (MT-CYB, CYC1 and UQCRFS1), 2 core proteins (UQCRC1 and UQCRC2) and probably 6 low-molecular weight proteins.</text>
</comment>
<comment type="subcellular location">
    <subcellularLocation>
        <location evidence="2">Mitochondrion inner membrane</location>
        <topology evidence="2">Multi-pass membrane protein</topology>
    </subcellularLocation>
</comment>
<comment type="miscellaneous">
    <text evidence="1">Heme 1 (or BL or b562) is low-potential and absorbs at about 562 nm, and heme 2 (or BH or b566) is high-potential and absorbs at about 566 nm.</text>
</comment>
<comment type="similarity">
    <text evidence="3 4">Belongs to the cytochrome b family.</text>
</comment>
<comment type="caution">
    <text evidence="2">The full-length protein contains only eight transmembrane helices, not nine as predicted by bioinformatics tools.</text>
</comment>
<gene>
    <name type="primary">MT-CYB</name>
    <name type="synonym">COB</name>
    <name type="synonym">CYTB</name>
    <name type="synonym">MTCYB</name>
</gene>
<organism>
    <name type="scientific">Chilabothrus subflavus</name>
    <name type="common">Jamaican yellow boa</name>
    <name type="synonym">Epicrates subflavus</name>
    <dbReference type="NCBI Taxonomy" id="8576"/>
    <lineage>
        <taxon>Eukaryota</taxon>
        <taxon>Metazoa</taxon>
        <taxon>Chordata</taxon>
        <taxon>Craniata</taxon>
        <taxon>Vertebrata</taxon>
        <taxon>Euteleostomi</taxon>
        <taxon>Lepidosauria</taxon>
        <taxon>Squamata</taxon>
        <taxon>Bifurcata</taxon>
        <taxon>Unidentata</taxon>
        <taxon>Episquamata</taxon>
        <taxon>Toxicofera</taxon>
        <taxon>Serpentes</taxon>
        <taxon>Henophidia</taxon>
        <taxon>Boidae</taxon>
        <taxon>Boinae</taxon>
        <taxon>Chilabothrus</taxon>
    </lineage>
</organism>
<evidence type="ECO:0000250" key="1"/>
<evidence type="ECO:0000250" key="2">
    <source>
        <dbReference type="UniProtKB" id="P00157"/>
    </source>
</evidence>
<evidence type="ECO:0000255" key="3">
    <source>
        <dbReference type="PROSITE-ProRule" id="PRU00967"/>
    </source>
</evidence>
<evidence type="ECO:0000255" key="4">
    <source>
        <dbReference type="PROSITE-ProRule" id="PRU00968"/>
    </source>
</evidence>
<dbReference type="EMBL" id="U69803">
    <property type="protein sequence ID" value="AAC01856.1"/>
    <property type="molecule type" value="Genomic_DNA"/>
</dbReference>
<dbReference type="EMBL" id="U69804">
    <property type="protein sequence ID" value="AAC01857.1"/>
    <property type="molecule type" value="Genomic_DNA"/>
</dbReference>
<dbReference type="EMBL" id="U69805">
    <property type="protein sequence ID" value="AAC01858.1"/>
    <property type="molecule type" value="Genomic_DNA"/>
</dbReference>
<dbReference type="EMBL" id="U69806">
    <property type="protein sequence ID" value="AAC01859.1"/>
    <property type="molecule type" value="Genomic_DNA"/>
</dbReference>
<dbReference type="EMBL" id="U69807">
    <property type="protein sequence ID" value="AAC01860.1"/>
    <property type="molecule type" value="Genomic_DNA"/>
</dbReference>
<dbReference type="SMR" id="O48062"/>
<dbReference type="GO" id="GO:0005743">
    <property type="term" value="C:mitochondrial inner membrane"/>
    <property type="evidence" value="ECO:0007669"/>
    <property type="project" value="UniProtKB-SubCell"/>
</dbReference>
<dbReference type="GO" id="GO:0045275">
    <property type="term" value="C:respiratory chain complex III"/>
    <property type="evidence" value="ECO:0007669"/>
    <property type="project" value="InterPro"/>
</dbReference>
<dbReference type="GO" id="GO:0046872">
    <property type="term" value="F:metal ion binding"/>
    <property type="evidence" value="ECO:0007669"/>
    <property type="project" value="UniProtKB-KW"/>
</dbReference>
<dbReference type="GO" id="GO:0008121">
    <property type="term" value="F:ubiquinol-cytochrome-c reductase activity"/>
    <property type="evidence" value="ECO:0007669"/>
    <property type="project" value="InterPro"/>
</dbReference>
<dbReference type="GO" id="GO:0006122">
    <property type="term" value="P:mitochondrial electron transport, ubiquinol to cytochrome c"/>
    <property type="evidence" value="ECO:0007669"/>
    <property type="project" value="TreeGrafter"/>
</dbReference>
<dbReference type="CDD" id="cd00290">
    <property type="entry name" value="cytochrome_b_C"/>
    <property type="match status" value="1"/>
</dbReference>
<dbReference type="CDD" id="cd00284">
    <property type="entry name" value="Cytochrome_b_N"/>
    <property type="match status" value="1"/>
</dbReference>
<dbReference type="Gene3D" id="1.20.810.10">
    <property type="entry name" value="Cytochrome Bc1 Complex, Chain C"/>
    <property type="match status" value="1"/>
</dbReference>
<dbReference type="InterPro" id="IPR005798">
    <property type="entry name" value="Cyt_b/b6_C"/>
</dbReference>
<dbReference type="InterPro" id="IPR036150">
    <property type="entry name" value="Cyt_b/b6_C_sf"/>
</dbReference>
<dbReference type="InterPro" id="IPR005797">
    <property type="entry name" value="Cyt_b/b6_N"/>
</dbReference>
<dbReference type="InterPro" id="IPR027387">
    <property type="entry name" value="Cytb/b6-like_sf"/>
</dbReference>
<dbReference type="InterPro" id="IPR030689">
    <property type="entry name" value="Cytochrome_b"/>
</dbReference>
<dbReference type="InterPro" id="IPR048260">
    <property type="entry name" value="Cytochrome_b_C_euk/bac"/>
</dbReference>
<dbReference type="InterPro" id="IPR048259">
    <property type="entry name" value="Cytochrome_b_N_euk/bac"/>
</dbReference>
<dbReference type="InterPro" id="IPR016174">
    <property type="entry name" value="Di-haem_cyt_TM"/>
</dbReference>
<dbReference type="PANTHER" id="PTHR19271">
    <property type="entry name" value="CYTOCHROME B"/>
    <property type="match status" value="1"/>
</dbReference>
<dbReference type="PANTHER" id="PTHR19271:SF16">
    <property type="entry name" value="CYTOCHROME B"/>
    <property type="match status" value="1"/>
</dbReference>
<dbReference type="Pfam" id="PF00032">
    <property type="entry name" value="Cytochrom_B_C"/>
    <property type="match status" value="1"/>
</dbReference>
<dbReference type="Pfam" id="PF00033">
    <property type="entry name" value="Cytochrome_B"/>
    <property type="match status" value="1"/>
</dbReference>
<dbReference type="PIRSF" id="PIRSF038885">
    <property type="entry name" value="COB"/>
    <property type="match status" value="1"/>
</dbReference>
<dbReference type="SUPFAM" id="SSF81648">
    <property type="entry name" value="a domain/subunit of cytochrome bc1 complex (Ubiquinol-cytochrome c reductase)"/>
    <property type="match status" value="1"/>
</dbReference>
<dbReference type="SUPFAM" id="SSF81342">
    <property type="entry name" value="Transmembrane di-heme cytochromes"/>
    <property type="match status" value="1"/>
</dbReference>
<dbReference type="PROSITE" id="PS51003">
    <property type="entry name" value="CYTB_CTER"/>
    <property type="match status" value="1"/>
</dbReference>
<dbReference type="PROSITE" id="PS51002">
    <property type="entry name" value="CYTB_NTER"/>
    <property type="match status" value="1"/>
</dbReference>
<reference key="1">
    <citation type="thesis" date="1997" institute="Queen's University / Kingston" country="Canada">
        <title>Hic Sunt Serpentes -- molecular phylogenetics and the Boidae (Serpentes: Booidea).</title>
        <authorList>
            <person name="Campbell B.N."/>
        </authorList>
    </citation>
    <scope>NUCLEOTIDE SEQUENCE [GENOMIC DNA]</scope>
</reference>
<feature type="chain" id="PRO_0000060931" description="Cytochrome b">
    <location>
        <begin position="1"/>
        <end position="370"/>
    </location>
</feature>
<feature type="transmembrane region" description="Helical" evidence="2">
    <location>
        <begin position="25"/>
        <end position="45"/>
    </location>
</feature>
<feature type="transmembrane region" description="Helical" evidence="2">
    <location>
        <begin position="69"/>
        <end position="90"/>
    </location>
</feature>
<feature type="transmembrane region" description="Helical" evidence="2">
    <location>
        <begin position="105"/>
        <end position="125"/>
    </location>
</feature>
<feature type="transmembrane region" description="Helical" evidence="2">
    <location>
        <begin position="170"/>
        <end position="190"/>
    </location>
</feature>
<feature type="transmembrane region" description="Helical" evidence="2">
    <location>
        <begin position="218"/>
        <end position="238"/>
    </location>
</feature>
<feature type="transmembrane region" description="Helical" evidence="2">
    <location>
        <begin position="280"/>
        <end position="300"/>
    </location>
</feature>
<feature type="transmembrane region" description="Helical" evidence="2">
    <location>
        <begin position="312"/>
        <end position="332"/>
    </location>
</feature>
<feature type="transmembrane region" description="Helical" evidence="2">
    <location>
        <begin position="339"/>
        <end position="358"/>
    </location>
</feature>
<feature type="binding site" description="axial binding residue" evidence="2">
    <location>
        <position position="75"/>
    </location>
    <ligand>
        <name>heme b</name>
        <dbReference type="ChEBI" id="CHEBI:60344"/>
        <label>b562</label>
    </ligand>
    <ligandPart>
        <name>Fe</name>
        <dbReference type="ChEBI" id="CHEBI:18248"/>
    </ligandPart>
</feature>
<feature type="binding site" description="axial binding residue" evidence="2">
    <location>
        <position position="89"/>
    </location>
    <ligand>
        <name>heme b</name>
        <dbReference type="ChEBI" id="CHEBI:60344"/>
        <label>b566</label>
    </ligand>
    <ligandPart>
        <name>Fe</name>
        <dbReference type="ChEBI" id="CHEBI:18248"/>
    </ligandPart>
</feature>
<feature type="binding site" description="axial binding residue" evidence="2">
    <location>
        <position position="174"/>
    </location>
    <ligand>
        <name>heme b</name>
        <dbReference type="ChEBI" id="CHEBI:60344"/>
        <label>b562</label>
    </ligand>
    <ligandPart>
        <name>Fe</name>
        <dbReference type="ChEBI" id="CHEBI:18248"/>
    </ligandPart>
</feature>
<feature type="binding site" description="axial binding residue" evidence="2">
    <location>
        <position position="188"/>
    </location>
    <ligand>
        <name>heme b</name>
        <dbReference type="ChEBI" id="CHEBI:60344"/>
        <label>b566</label>
    </ligand>
    <ligandPart>
        <name>Fe</name>
        <dbReference type="ChEBI" id="CHEBI:18248"/>
    </ligandPart>
</feature>
<feature type="binding site" evidence="2">
    <location>
        <position position="193"/>
    </location>
    <ligand>
        <name>a ubiquinone</name>
        <dbReference type="ChEBI" id="CHEBI:16389"/>
    </ligand>
</feature>